<protein>
    <recommendedName>
        <fullName evidence="1">ATP synthase gamma chain</fullName>
    </recommendedName>
    <alternativeName>
        <fullName evidence="1">ATP synthase F1 sector gamma subunit</fullName>
    </alternativeName>
    <alternativeName>
        <fullName evidence="1">F-ATPase gamma subunit</fullName>
    </alternativeName>
</protein>
<name>ATPG_BLOPB</name>
<proteinExistence type="inferred from homology"/>
<reference key="1">
    <citation type="journal article" date="2005" name="Genome Res.">
        <title>Genome sequence of Blochmannia pennsylvanicus indicates parallel evolutionary trends among bacterial mutualists of insects.</title>
        <authorList>
            <person name="Degnan P.H."/>
            <person name="Lazarus A.B."/>
            <person name="Wernegreen J.J."/>
        </authorList>
    </citation>
    <scope>NUCLEOTIDE SEQUENCE [LARGE SCALE GENOMIC DNA]</scope>
    <source>
        <strain>BPEN</strain>
    </source>
</reference>
<evidence type="ECO:0000255" key="1">
    <source>
        <dbReference type="HAMAP-Rule" id="MF_00815"/>
    </source>
</evidence>
<organism>
    <name type="scientific">Blochmanniella pennsylvanica (strain BPEN)</name>
    <dbReference type="NCBI Taxonomy" id="291272"/>
    <lineage>
        <taxon>Bacteria</taxon>
        <taxon>Pseudomonadati</taxon>
        <taxon>Pseudomonadota</taxon>
        <taxon>Gammaproteobacteria</taxon>
        <taxon>Enterobacterales</taxon>
        <taxon>Enterobacteriaceae</taxon>
        <taxon>ant endosymbionts</taxon>
        <taxon>Candidatus Blochmanniella</taxon>
    </lineage>
</organism>
<keyword id="KW-0066">ATP synthesis</keyword>
<keyword id="KW-0997">Cell inner membrane</keyword>
<keyword id="KW-1003">Cell membrane</keyword>
<keyword id="KW-0139">CF(1)</keyword>
<keyword id="KW-0375">Hydrogen ion transport</keyword>
<keyword id="KW-0406">Ion transport</keyword>
<keyword id="KW-0472">Membrane</keyword>
<keyword id="KW-1185">Reference proteome</keyword>
<keyword id="KW-0813">Transport</keyword>
<comment type="function">
    <text evidence="1">Produces ATP from ADP in the presence of a proton gradient across the membrane. The gamma chain is believed to be important in regulating ATPase activity and the flow of protons through the CF(0) complex.</text>
</comment>
<comment type="subunit">
    <text evidence="1">F-type ATPases have 2 components, CF(1) - the catalytic core - and CF(0) - the membrane proton channel. CF(1) has five subunits: alpha(3), beta(3), gamma(1), delta(1), epsilon(1). CF(0) has three main subunits: a, b and c.</text>
</comment>
<comment type="subcellular location">
    <subcellularLocation>
        <location evidence="1">Cell inner membrane</location>
        <topology evidence="1">Peripheral membrane protein</topology>
    </subcellularLocation>
</comment>
<comment type="similarity">
    <text evidence="1">Belongs to the ATPase gamma chain family.</text>
</comment>
<feature type="chain" id="PRO_0000073244" description="ATP synthase gamma chain">
    <location>
        <begin position="1"/>
        <end position="288"/>
    </location>
</feature>
<gene>
    <name evidence="1" type="primary">atpG</name>
    <name type="ordered locus">BPEN_007</name>
</gene>
<sequence>MSGLKEIRGKIDSIRNIQKIAKAMEMISVAKIYQTQRRMLISKPYAETIRKVIDHISSGTLEYKHSYFLERKIQSVGYWVVSTDRGLAGGLNINLLKTLLYDFNKWSNEGITIRLAIIGSKGASFLRSIKQTEIVSCVYGIGDAPKMSALIGSVRVMLQLYDNNQIDRLYLAYNKFINTLTQSPQILQILPIISSKNSILQTKYWDYLYEPDSKVLLNSLLQRYIESQVYQGVVENLASEQSARMMAMKTASDNGEVIINDLKLFYNKARQTKITEELTEIVSGASVI</sequence>
<dbReference type="EMBL" id="CP000016">
    <property type="protein sequence ID" value="AAZ40657.1"/>
    <property type="molecule type" value="Genomic_DNA"/>
</dbReference>
<dbReference type="RefSeq" id="WP_011282563.1">
    <property type="nucleotide sequence ID" value="NC_007292.1"/>
</dbReference>
<dbReference type="SMR" id="Q494C4"/>
<dbReference type="STRING" id="291272.BPEN_007"/>
<dbReference type="KEGG" id="bpn:BPEN_007"/>
<dbReference type="eggNOG" id="COG0224">
    <property type="taxonomic scope" value="Bacteria"/>
</dbReference>
<dbReference type="HOGENOM" id="CLU_050669_0_1_6"/>
<dbReference type="OrthoDB" id="9812769at2"/>
<dbReference type="Proteomes" id="UP000007794">
    <property type="component" value="Chromosome"/>
</dbReference>
<dbReference type="GO" id="GO:0005886">
    <property type="term" value="C:plasma membrane"/>
    <property type="evidence" value="ECO:0007669"/>
    <property type="project" value="UniProtKB-SubCell"/>
</dbReference>
<dbReference type="GO" id="GO:0045259">
    <property type="term" value="C:proton-transporting ATP synthase complex"/>
    <property type="evidence" value="ECO:0007669"/>
    <property type="project" value="UniProtKB-KW"/>
</dbReference>
<dbReference type="GO" id="GO:0005524">
    <property type="term" value="F:ATP binding"/>
    <property type="evidence" value="ECO:0007669"/>
    <property type="project" value="UniProtKB-UniRule"/>
</dbReference>
<dbReference type="GO" id="GO:0046933">
    <property type="term" value="F:proton-transporting ATP synthase activity, rotational mechanism"/>
    <property type="evidence" value="ECO:0007669"/>
    <property type="project" value="UniProtKB-UniRule"/>
</dbReference>
<dbReference type="GO" id="GO:0042777">
    <property type="term" value="P:proton motive force-driven plasma membrane ATP synthesis"/>
    <property type="evidence" value="ECO:0007669"/>
    <property type="project" value="UniProtKB-UniRule"/>
</dbReference>
<dbReference type="CDD" id="cd12151">
    <property type="entry name" value="F1-ATPase_gamma"/>
    <property type="match status" value="1"/>
</dbReference>
<dbReference type="FunFam" id="1.10.287.80:FF:000005">
    <property type="entry name" value="ATP synthase gamma chain"/>
    <property type="match status" value="1"/>
</dbReference>
<dbReference type="Gene3D" id="3.40.1380.10">
    <property type="match status" value="1"/>
</dbReference>
<dbReference type="Gene3D" id="1.10.287.80">
    <property type="entry name" value="ATP synthase, gamma subunit, helix hairpin domain"/>
    <property type="match status" value="1"/>
</dbReference>
<dbReference type="HAMAP" id="MF_00815">
    <property type="entry name" value="ATP_synth_gamma_bact"/>
    <property type="match status" value="1"/>
</dbReference>
<dbReference type="InterPro" id="IPR035968">
    <property type="entry name" value="ATP_synth_F1_ATPase_gsu"/>
</dbReference>
<dbReference type="InterPro" id="IPR000131">
    <property type="entry name" value="ATP_synth_F1_gsu"/>
</dbReference>
<dbReference type="NCBIfam" id="TIGR01146">
    <property type="entry name" value="ATPsyn_F1gamma"/>
    <property type="match status" value="1"/>
</dbReference>
<dbReference type="NCBIfam" id="NF004144">
    <property type="entry name" value="PRK05621.1-1"/>
    <property type="match status" value="1"/>
</dbReference>
<dbReference type="PANTHER" id="PTHR11693">
    <property type="entry name" value="ATP SYNTHASE GAMMA CHAIN"/>
    <property type="match status" value="1"/>
</dbReference>
<dbReference type="PANTHER" id="PTHR11693:SF22">
    <property type="entry name" value="ATP SYNTHASE SUBUNIT GAMMA, MITOCHONDRIAL"/>
    <property type="match status" value="1"/>
</dbReference>
<dbReference type="Pfam" id="PF00231">
    <property type="entry name" value="ATP-synt"/>
    <property type="match status" value="1"/>
</dbReference>
<dbReference type="PRINTS" id="PR00126">
    <property type="entry name" value="ATPASEGAMMA"/>
</dbReference>
<dbReference type="SUPFAM" id="SSF52943">
    <property type="entry name" value="ATP synthase (F1-ATPase), gamma subunit"/>
    <property type="match status" value="1"/>
</dbReference>
<accession>Q494C4</accession>